<comment type="catalytic activity">
    <reaction>
        <text>L-seryl-[protein] + ATP = O-phospho-L-seryl-[protein] + ADP + H(+)</text>
        <dbReference type="Rhea" id="RHEA:17989"/>
        <dbReference type="Rhea" id="RHEA-COMP:9863"/>
        <dbReference type="Rhea" id="RHEA-COMP:11604"/>
        <dbReference type="ChEBI" id="CHEBI:15378"/>
        <dbReference type="ChEBI" id="CHEBI:29999"/>
        <dbReference type="ChEBI" id="CHEBI:30616"/>
        <dbReference type="ChEBI" id="CHEBI:83421"/>
        <dbReference type="ChEBI" id="CHEBI:456216"/>
        <dbReference type="EC" id="2.7.11.1"/>
    </reaction>
</comment>
<comment type="catalytic activity">
    <reaction>
        <text>L-threonyl-[protein] + ATP = O-phospho-L-threonyl-[protein] + ADP + H(+)</text>
        <dbReference type="Rhea" id="RHEA:46608"/>
        <dbReference type="Rhea" id="RHEA-COMP:11060"/>
        <dbReference type="Rhea" id="RHEA-COMP:11605"/>
        <dbReference type="ChEBI" id="CHEBI:15378"/>
        <dbReference type="ChEBI" id="CHEBI:30013"/>
        <dbReference type="ChEBI" id="CHEBI:30616"/>
        <dbReference type="ChEBI" id="CHEBI:61977"/>
        <dbReference type="ChEBI" id="CHEBI:456216"/>
        <dbReference type="EC" id="2.7.11.1"/>
    </reaction>
</comment>
<comment type="PTM">
    <text evidence="1">Autophosphorylated.</text>
</comment>
<comment type="similarity">
    <text evidence="2">Belongs to the protein kinase superfamily. Ser/Thr protein kinase family.</text>
</comment>
<comment type="sequence caution" evidence="5">
    <conflict type="erroneous initiation">
        <sequence resource="EMBL-CDS" id="CAC29812"/>
    </conflict>
</comment>
<evidence type="ECO:0000250" key="1"/>
<evidence type="ECO:0000255" key="2">
    <source>
        <dbReference type="PROSITE-ProRule" id="PRU00159"/>
    </source>
</evidence>
<evidence type="ECO:0000255" key="3">
    <source>
        <dbReference type="PROSITE-ProRule" id="PRU10027"/>
    </source>
</evidence>
<evidence type="ECO:0000256" key="4">
    <source>
        <dbReference type="SAM" id="MobiDB-lite"/>
    </source>
</evidence>
<evidence type="ECO:0000305" key="5"/>
<gene>
    <name type="primary">pknG</name>
    <name type="ordered locus">ML0304</name>
    <name type="ORF">MLCB1450.19c</name>
</gene>
<proteinExistence type="inferred from homology"/>
<feature type="chain" id="PRO_0000171215" description="Serine/threonine-protein kinase PknG">
    <location>
        <begin position="1"/>
        <end position="763"/>
    </location>
</feature>
<feature type="domain" description="Protein kinase" evidence="2">
    <location>
        <begin position="160"/>
        <end position="406"/>
    </location>
</feature>
<feature type="region of interest" description="Disordered" evidence="4">
    <location>
        <begin position="1"/>
        <end position="32"/>
    </location>
</feature>
<feature type="active site" description="Proton acceptor" evidence="2 3">
    <location>
        <position position="289"/>
    </location>
</feature>
<feature type="binding site" evidence="2">
    <location>
        <begin position="166"/>
        <end position="174"/>
    </location>
    <ligand>
        <name>ATP</name>
        <dbReference type="ChEBI" id="CHEBI:30616"/>
    </ligand>
</feature>
<feature type="binding site" evidence="2">
    <location>
        <position position="190"/>
    </location>
    <ligand>
        <name>ATP</name>
        <dbReference type="ChEBI" id="CHEBI:30616"/>
    </ligand>
</feature>
<accession>P57993</accession>
<accession>Q9ZBL8</accession>
<organism>
    <name type="scientific">Mycobacterium leprae (strain TN)</name>
    <dbReference type="NCBI Taxonomy" id="272631"/>
    <lineage>
        <taxon>Bacteria</taxon>
        <taxon>Bacillati</taxon>
        <taxon>Actinomycetota</taxon>
        <taxon>Actinomycetes</taxon>
        <taxon>Mycobacteriales</taxon>
        <taxon>Mycobacteriaceae</taxon>
        <taxon>Mycobacterium</taxon>
    </lineage>
</organism>
<sequence>MKREHMDHDTEDVGQAAQRADPPSGTTEGRLQSTQAIFRPNFDDDDDLLHISVPSVDTEPQDRITPATRVLPPIRQLGGGLVEIRRVRDIDPLEALMTNPVVPESKRFCWNCGRPVGRSELEGQEADGAQGAKEGWCPYCGSPYSFLPQLSPGDIVAGQYEVKGCIAHGGLGWVYLAFDHNVNDRPVVLKGLVHSGDAEAQASAVAERQFLAEVVHPQIVQIFNFVEHKDTSGDPVGYIVMEYIGGRSLKRGSKKGNVEKLPVAEAIAYLLEILPALSYLHSIGLVYNDLKPENIMLTEEQLKLIDLGAVSRINSFGCIYGTPGYQAPEIVRTGPTVATDIYTVGRTLAALTLNLRTRNGRYMDGLPEDDPVLTTYDSFARLLHRAINPDPRRRFSSAEEMSAQLMGVLREVVAQDTGVPRAGLSTIFSPSRSTFGVDLLVAHTDVYLDGRLHSEKLTAKDIVTALQVPLVDPTDVAAPVLQATVLSQPVQTLDSLRAARHGMLDAQGIDLAESVELPLMEVRALLDLGDVVKANRKLDDLADRVSCQWRLVWYRAVADLLTGDYASATKHFTEVLNTFPGELAPKLALAATAELAGESDEHKFYRTVWHTNDGVVSAAFGLARFQSAEGDRTGAVCTLDEVPPTSRHFTTARLTSAVTLLSGRSTNEITEQQIRDAARRVETLPPTEPRVLQIRALVLGCAMDWLADNQASANHILGFPFTKHGLRLGVEASLRSLARVAPTQRHRYTLVDMANKVRPTSTL</sequence>
<keyword id="KW-0067">ATP-binding</keyword>
<keyword id="KW-0418">Kinase</keyword>
<keyword id="KW-0547">Nucleotide-binding</keyword>
<keyword id="KW-0597">Phosphoprotein</keyword>
<keyword id="KW-1185">Reference proteome</keyword>
<keyword id="KW-0723">Serine/threonine-protein kinase</keyword>
<keyword id="KW-0808">Transferase</keyword>
<protein>
    <recommendedName>
        <fullName>Serine/threonine-protein kinase PknG</fullName>
        <ecNumber>2.7.11.1</ecNumber>
    </recommendedName>
</protein>
<dbReference type="EC" id="2.7.11.1"/>
<dbReference type="EMBL" id="AL035159">
    <property type="protein sequence ID" value="CAA22703.1"/>
    <property type="molecule type" value="Genomic_DNA"/>
</dbReference>
<dbReference type="EMBL" id="AL583918">
    <property type="protein sequence ID" value="CAC29812.1"/>
    <property type="status" value="ALT_INIT"/>
    <property type="molecule type" value="Genomic_DNA"/>
</dbReference>
<dbReference type="PIR" id="H86946">
    <property type="entry name" value="H86946"/>
</dbReference>
<dbReference type="PIR" id="T44735">
    <property type="entry name" value="T44735"/>
</dbReference>
<dbReference type="SMR" id="P57993"/>
<dbReference type="STRING" id="272631.gene:17574123"/>
<dbReference type="KEGG" id="mle:ML0304"/>
<dbReference type="Leproma" id="ML0304"/>
<dbReference type="eggNOG" id="COG0515">
    <property type="taxonomic scope" value="Bacteria"/>
</dbReference>
<dbReference type="HOGENOM" id="CLU_011707_0_0_11"/>
<dbReference type="Proteomes" id="UP000000806">
    <property type="component" value="Chromosome"/>
</dbReference>
<dbReference type="GO" id="GO:0005524">
    <property type="term" value="F:ATP binding"/>
    <property type="evidence" value="ECO:0007669"/>
    <property type="project" value="UniProtKB-KW"/>
</dbReference>
<dbReference type="GO" id="GO:0106310">
    <property type="term" value="F:protein serine kinase activity"/>
    <property type="evidence" value="ECO:0007669"/>
    <property type="project" value="RHEA"/>
</dbReference>
<dbReference type="GO" id="GO:0004674">
    <property type="term" value="F:protein serine/threonine kinase activity"/>
    <property type="evidence" value="ECO:0007669"/>
    <property type="project" value="UniProtKB-KW"/>
</dbReference>
<dbReference type="GO" id="GO:0019222">
    <property type="term" value="P:regulation of metabolic process"/>
    <property type="evidence" value="ECO:0007669"/>
    <property type="project" value="UniProtKB-ARBA"/>
</dbReference>
<dbReference type="CDD" id="cd14014">
    <property type="entry name" value="STKc_PknB_like"/>
    <property type="match status" value="1"/>
</dbReference>
<dbReference type="FunFam" id="1.10.510.10:FF:000306">
    <property type="entry name" value="Serine/threonine protein kinase"/>
    <property type="match status" value="1"/>
</dbReference>
<dbReference type="FunFam" id="1.25.40.10:FF:000318">
    <property type="entry name" value="Serine/threonine protein kinase"/>
    <property type="match status" value="1"/>
</dbReference>
<dbReference type="FunFam" id="3.30.200.20:FF:000205">
    <property type="entry name" value="Serine/threonine protein kinase"/>
    <property type="match status" value="1"/>
</dbReference>
<dbReference type="Gene3D" id="3.30.200.20">
    <property type="entry name" value="Phosphorylase Kinase, domain 1"/>
    <property type="match status" value="1"/>
</dbReference>
<dbReference type="Gene3D" id="1.25.40.10">
    <property type="entry name" value="Tetratricopeptide repeat domain"/>
    <property type="match status" value="2"/>
</dbReference>
<dbReference type="Gene3D" id="1.10.510.10">
    <property type="entry name" value="Transferase(Phosphotransferase) domain 1"/>
    <property type="match status" value="1"/>
</dbReference>
<dbReference type="InterPro" id="IPR011009">
    <property type="entry name" value="Kinase-like_dom_sf"/>
</dbReference>
<dbReference type="InterPro" id="IPR031634">
    <property type="entry name" value="PknG_rubred"/>
</dbReference>
<dbReference type="InterPro" id="IPR031636">
    <property type="entry name" value="PknG_TPR"/>
</dbReference>
<dbReference type="InterPro" id="IPR000719">
    <property type="entry name" value="Prot_kinase_dom"/>
</dbReference>
<dbReference type="InterPro" id="IPR008271">
    <property type="entry name" value="Ser/Thr_kinase_AS"/>
</dbReference>
<dbReference type="InterPro" id="IPR011990">
    <property type="entry name" value="TPR-like_helical_dom_sf"/>
</dbReference>
<dbReference type="PANTHER" id="PTHR24363">
    <property type="entry name" value="SERINE/THREONINE PROTEIN KINASE"/>
    <property type="match status" value="1"/>
</dbReference>
<dbReference type="PANTHER" id="PTHR24363:SF0">
    <property type="entry name" value="SERINE_THREONINE KINASE LIKE DOMAIN CONTAINING 1"/>
    <property type="match status" value="1"/>
</dbReference>
<dbReference type="Pfam" id="PF00069">
    <property type="entry name" value="Pkinase"/>
    <property type="match status" value="1"/>
</dbReference>
<dbReference type="Pfam" id="PF16919">
    <property type="entry name" value="PknG_rubred"/>
    <property type="match status" value="1"/>
</dbReference>
<dbReference type="Pfam" id="PF16918">
    <property type="entry name" value="PknG_TPR"/>
    <property type="match status" value="1"/>
</dbReference>
<dbReference type="SMART" id="SM00220">
    <property type="entry name" value="S_TKc"/>
    <property type="match status" value="1"/>
</dbReference>
<dbReference type="SUPFAM" id="SSF56112">
    <property type="entry name" value="Protein kinase-like (PK-like)"/>
    <property type="match status" value="1"/>
</dbReference>
<dbReference type="PROSITE" id="PS50011">
    <property type="entry name" value="PROTEIN_KINASE_DOM"/>
    <property type="match status" value="1"/>
</dbReference>
<dbReference type="PROSITE" id="PS00108">
    <property type="entry name" value="PROTEIN_KINASE_ST"/>
    <property type="match status" value="1"/>
</dbReference>
<reference key="1">
    <citation type="journal article" date="2001" name="Nature">
        <title>Massive gene decay in the leprosy bacillus.</title>
        <authorList>
            <person name="Cole S.T."/>
            <person name="Eiglmeier K."/>
            <person name="Parkhill J."/>
            <person name="James K.D."/>
            <person name="Thomson N.R."/>
            <person name="Wheeler P.R."/>
            <person name="Honore N."/>
            <person name="Garnier T."/>
            <person name="Churcher C.M."/>
            <person name="Harris D.E."/>
            <person name="Mungall K.L."/>
            <person name="Basham D."/>
            <person name="Brown D."/>
            <person name="Chillingworth T."/>
            <person name="Connor R."/>
            <person name="Davies R.M."/>
            <person name="Devlin K."/>
            <person name="Duthoy S."/>
            <person name="Feltwell T."/>
            <person name="Fraser A."/>
            <person name="Hamlin N."/>
            <person name="Holroyd S."/>
            <person name="Hornsby T."/>
            <person name="Jagels K."/>
            <person name="Lacroix C."/>
            <person name="Maclean J."/>
            <person name="Moule S."/>
            <person name="Murphy L.D."/>
            <person name="Oliver K."/>
            <person name="Quail M.A."/>
            <person name="Rajandream M.A."/>
            <person name="Rutherford K.M."/>
            <person name="Rutter S."/>
            <person name="Seeger K."/>
            <person name="Simon S."/>
            <person name="Simmonds M."/>
            <person name="Skelton J."/>
            <person name="Squares R."/>
            <person name="Squares S."/>
            <person name="Stevens K."/>
            <person name="Taylor K."/>
            <person name="Whitehead S."/>
            <person name="Woodward J.R."/>
            <person name="Barrell B.G."/>
        </authorList>
    </citation>
    <scope>NUCLEOTIDE SEQUENCE [LARGE SCALE GENOMIC DNA]</scope>
    <source>
        <strain>TN</strain>
    </source>
</reference>
<name>PKNG_MYCLE</name>